<dbReference type="EMBL" id="GAQE01000030">
    <property type="protein sequence ID" value="JAB84524.1"/>
    <property type="molecule type" value="Transcribed_RNA"/>
</dbReference>
<dbReference type="ArachnoServer" id="AS001717">
    <property type="toxin name" value="U16-barytoxin-Tl1c"/>
</dbReference>
<dbReference type="GO" id="GO:0005576">
    <property type="term" value="C:extracellular region"/>
    <property type="evidence" value="ECO:0007669"/>
    <property type="project" value="UniProtKB-SubCell"/>
</dbReference>
<dbReference type="GO" id="GO:0019871">
    <property type="term" value="F:sodium channel inhibitor activity"/>
    <property type="evidence" value="ECO:0007669"/>
    <property type="project" value="InterPro"/>
</dbReference>
<dbReference type="GO" id="GO:0090729">
    <property type="term" value="F:toxin activity"/>
    <property type="evidence" value="ECO:0007669"/>
    <property type="project" value="UniProtKB-KW"/>
</dbReference>
<dbReference type="InterPro" id="IPR012627">
    <property type="entry name" value="Toxin_22"/>
</dbReference>
<dbReference type="Pfam" id="PF08092">
    <property type="entry name" value="Toxin_22"/>
    <property type="match status" value="1"/>
</dbReference>
<name>ICK27_TRILK</name>
<evidence type="ECO:0000250" key="1"/>
<evidence type="ECO:0000255" key="2"/>
<evidence type="ECO:0000303" key="3">
    <source>
    </source>
</evidence>
<evidence type="ECO:0000305" key="4"/>
<protein>
    <recommendedName>
        <fullName>U16-barytoxin-Tl1c</fullName>
        <shortName>U16-BATX-Tl1c</shortName>
    </recommendedName>
    <alternativeName>
        <fullName evidence="3">Toxin ICK-27</fullName>
    </alternativeName>
</protein>
<organism>
    <name type="scientific">Trittame loki</name>
    <name type="common">Brush-footed trapdoor spider</name>
    <dbReference type="NCBI Taxonomy" id="1295018"/>
    <lineage>
        <taxon>Eukaryota</taxon>
        <taxon>Metazoa</taxon>
        <taxon>Ecdysozoa</taxon>
        <taxon>Arthropoda</taxon>
        <taxon>Chelicerata</taxon>
        <taxon>Arachnida</taxon>
        <taxon>Araneae</taxon>
        <taxon>Mygalomorphae</taxon>
        <taxon>Barychelidae</taxon>
        <taxon>Trittame</taxon>
    </lineage>
</organism>
<sequence length="116" mass="13014">MKTIIVFLSLLVLATKFGDANEGVNQEQMKEVIQNEFREDFLNEMAPMSLLQQLEAIESTLLEKEADRNSRQKRCNGKNVPCGSNHSPCCSGLSCEETFGYGWLYKSPYCVIPSNG</sequence>
<reference key="1">
    <citation type="journal article" date="2013" name="Toxins">
        <title>A proteomics and transcriptomics investigation of the venom from the barychelid spider Trittame loki (brush-foot trapdoor).</title>
        <authorList>
            <person name="Undheim E.A."/>
            <person name="Sunagar K."/>
            <person name="Herzig V."/>
            <person name="Kely L."/>
            <person name="Low D.H."/>
            <person name="Jackson T.N."/>
            <person name="Jones A."/>
            <person name="Kurniawan N."/>
            <person name="King G.F."/>
            <person name="Ali S.A."/>
            <person name="Antunes A."/>
            <person name="Ruder T."/>
            <person name="Fry B.G."/>
        </authorList>
    </citation>
    <scope>NUCLEOTIDE SEQUENCE [MRNA]</scope>
    <source>
        <tissue>Venom gland</tissue>
    </source>
</reference>
<proteinExistence type="evidence at transcript level"/>
<accession>W4VRW6</accession>
<comment type="function">
    <text evidence="4">Ion channel inhibitor.</text>
</comment>
<comment type="subcellular location">
    <subcellularLocation>
        <location evidence="1">Secreted</location>
    </subcellularLocation>
</comment>
<comment type="tissue specificity">
    <text>Expressed by the venom gland.</text>
</comment>
<comment type="domain">
    <text evidence="1">The presence of a 'disulfide through disulfide knot' structurally defines this protein as a knottin.</text>
</comment>
<comment type="similarity">
    <text evidence="4">Belongs to the neurotoxin 14 (magi-1) family. 06 (ICK-Trit) subfamily.</text>
</comment>
<feature type="signal peptide" evidence="2">
    <location>
        <begin position="1"/>
        <end position="20"/>
    </location>
</feature>
<feature type="propeptide" id="PRO_0000435150" evidence="4">
    <location>
        <begin position="21"/>
        <end position="76"/>
    </location>
</feature>
<feature type="chain" id="PRO_0000429234" description="U16-barytoxin-Tl1c">
    <location>
        <begin position="75"/>
        <end position="116"/>
    </location>
</feature>
<feature type="disulfide bond" evidence="1">
    <location>
        <begin position="75"/>
        <end position="90"/>
    </location>
</feature>
<feature type="disulfide bond" evidence="1">
    <location>
        <begin position="82"/>
        <end position="95"/>
    </location>
</feature>
<feature type="disulfide bond" evidence="1">
    <location>
        <begin position="89"/>
        <end position="110"/>
    </location>
</feature>
<keyword id="KW-0165">Cleavage on pair of basic residues</keyword>
<keyword id="KW-1015">Disulfide bond</keyword>
<keyword id="KW-0872">Ion channel impairing toxin</keyword>
<keyword id="KW-0960">Knottin</keyword>
<keyword id="KW-0964">Secreted</keyword>
<keyword id="KW-0732">Signal</keyword>
<keyword id="KW-0800">Toxin</keyword>